<gene>
    <name evidence="1" type="primary">miaB</name>
    <name type="ordered locus">BPSL0674</name>
</gene>
<keyword id="KW-0004">4Fe-4S</keyword>
<keyword id="KW-0963">Cytoplasm</keyword>
<keyword id="KW-0408">Iron</keyword>
<keyword id="KW-0411">Iron-sulfur</keyword>
<keyword id="KW-0479">Metal-binding</keyword>
<keyword id="KW-1185">Reference proteome</keyword>
<keyword id="KW-0949">S-adenosyl-L-methionine</keyword>
<keyword id="KW-0808">Transferase</keyword>
<keyword id="KW-0819">tRNA processing</keyword>
<evidence type="ECO:0000255" key="1">
    <source>
        <dbReference type="HAMAP-Rule" id="MF_01864"/>
    </source>
</evidence>
<evidence type="ECO:0000255" key="2">
    <source>
        <dbReference type="PROSITE-ProRule" id="PRU01266"/>
    </source>
</evidence>
<organism>
    <name type="scientific">Burkholderia pseudomallei (strain K96243)</name>
    <dbReference type="NCBI Taxonomy" id="272560"/>
    <lineage>
        <taxon>Bacteria</taxon>
        <taxon>Pseudomonadati</taxon>
        <taxon>Pseudomonadota</taxon>
        <taxon>Betaproteobacteria</taxon>
        <taxon>Burkholderiales</taxon>
        <taxon>Burkholderiaceae</taxon>
        <taxon>Burkholderia</taxon>
        <taxon>pseudomallei group</taxon>
    </lineage>
</organism>
<reference key="1">
    <citation type="journal article" date="2004" name="Proc. Natl. Acad. Sci. U.S.A.">
        <title>Genomic plasticity of the causative agent of melioidosis, Burkholderia pseudomallei.</title>
        <authorList>
            <person name="Holden M.T.G."/>
            <person name="Titball R.W."/>
            <person name="Peacock S.J."/>
            <person name="Cerdeno-Tarraga A.-M."/>
            <person name="Atkins T."/>
            <person name="Crossman L.C."/>
            <person name="Pitt T."/>
            <person name="Churcher C."/>
            <person name="Mungall K.L."/>
            <person name="Bentley S.D."/>
            <person name="Sebaihia M."/>
            <person name="Thomson N.R."/>
            <person name="Bason N."/>
            <person name="Beacham I.R."/>
            <person name="Brooks K."/>
            <person name="Brown K.A."/>
            <person name="Brown N.F."/>
            <person name="Challis G.L."/>
            <person name="Cherevach I."/>
            <person name="Chillingworth T."/>
            <person name="Cronin A."/>
            <person name="Crossett B."/>
            <person name="Davis P."/>
            <person name="DeShazer D."/>
            <person name="Feltwell T."/>
            <person name="Fraser A."/>
            <person name="Hance Z."/>
            <person name="Hauser H."/>
            <person name="Holroyd S."/>
            <person name="Jagels K."/>
            <person name="Keith K.E."/>
            <person name="Maddison M."/>
            <person name="Moule S."/>
            <person name="Price C."/>
            <person name="Quail M.A."/>
            <person name="Rabbinowitsch E."/>
            <person name="Rutherford K."/>
            <person name="Sanders M."/>
            <person name="Simmonds M."/>
            <person name="Songsivilai S."/>
            <person name="Stevens K."/>
            <person name="Tumapa S."/>
            <person name="Vesaratchavest M."/>
            <person name="Whitehead S."/>
            <person name="Yeats C."/>
            <person name="Barrell B.G."/>
            <person name="Oyston P.C.F."/>
            <person name="Parkhill J."/>
        </authorList>
    </citation>
    <scope>NUCLEOTIDE SEQUENCE [LARGE SCALE GENOMIC DNA]</scope>
    <source>
        <strain>K96243</strain>
    </source>
</reference>
<dbReference type="EC" id="2.8.4.3" evidence="1"/>
<dbReference type="EMBL" id="BX571965">
    <property type="protein sequence ID" value="CAH34667.1"/>
    <property type="molecule type" value="Genomic_DNA"/>
</dbReference>
<dbReference type="RefSeq" id="WP_004190165.1">
    <property type="nucleotide sequence ID" value="NZ_CP009538.1"/>
</dbReference>
<dbReference type="RefSeq" id="YP_107303.1">
    <property type="nucleotide sequence ID" value="NC_006350.1"/>
</dbReference>
<dbReference type="SMR" id="Q63X63"/>
<dbReference type="STRING" id="272560.BPSL0674"/>
<dbReference type="GeneID" id="93059186"/>
<dbReference type="KEGG" id="bps:BPSL0674"/>
<dbReference type="PATRIC" id="fig|272560.51.peg.945"/>
<dbReference type="eggNOG" id="COG0621">
    <property type="taxonomic scope" value="Bacteria"/>
</dbReference>
<dbReference type="Proteomes" id="UP000000605">
    <property type="component" value="Chromosome 1"/>
</dbReference>
<dbReference type="GO" id="GO:0005829">
    <property type="term" value="C:cytosol"/>
    <property type="evidence" value="ECO:0007669"/>
    <property type="project" value="TreeGrafter"/>
</dbReference>
<dbReference type="GO" id="GO:0051539">
    <property type="term" value="F:4 iron, 4 sulfur cluster binding"/>
    <property type="evidence" value="ECO:0007669"/>
    <property type="project" value="UniProtKB-UniRule"/>
</dbReference>
<dbReference type="GO" id="GO:0046872">
    <property type="term" value="F:metal ion binding"/>
    <property type="evidence" value="ECO:0007669"/>
    <property type="project" value="UniProtKB-KW"/>
</dbReference>
<dbReference type="GO" id="GO:0035597">
    <property type="term" value="F:N6-isopentenyladenosine methylthiotransferase activity"/>
    <property type="evidence" value="ECO:0007669"/>
    <property type="project" value="TreeGrafter"/>
</dbReference>
<dbReference type="CDD" id="cd01335">
    <property type="entry name" value="Radical_SAM"/>
    <property type="match status" value="1"/>
</dbReference>
<dbReference type="FunFam" id="3.40.50.12160:FF:000001">
    <property type="entry name" value="tRNA-2-methylthio-N(6)-dimethylallyladenosine synthase"/>
    <property type="match status" value="1"/>
</dbReference>
<dbReference type="FunFam" id="3.80.30.20:FF:000001">
    <property type="entry name" value="tRNA-2-methylthio-N(6)-dimethylallyladenosine synthase 2"/>
    <property type="match status" value="1"/>
</dbReference>
<dbReference type="Gene3D" id="3.40.50.12160">
    <property type="entry name" value="Methylthiotransferase, N-terminal domain"/>
    <property type="match status" value="1"/>
</dbReference>
<dbReference type="Gene3D" id="3.80.30.20">
    <property type="entry name" value="tm_1862 like domain"/>
    <property type="match status" value="1"/>
</dbReference>
<dbReference type="HAMAP" id="MF_01864">
    <property type="entry name" value="tRNA_metthiotr_MiaB"/>
    <property type="match status" value="1"/>
</dbReference>
<dbReference type="InterPro" id="IPR006638">
    <property type="entry name" value="Elp3/MiaA/NifB-like_rSAM"/>
</dbReference>
<dbReference type="InterPro" id="IPR005839">
    <property type="entry name" value="Methylthiotransferase"/>
</dbReference>
<dbReference type="InterPro" id="IPR020612">
    <property type="entry name" value="Methylthiotransferase_CS"/>
</dbReference>
<dbReference type="InterPro" id="IPR013848">
    <property type="entry name" value="Methylthiotransferase_N"/>
</dbReference>
<dbReference type="InterPro" id="IPR038135">
    <property type="entry name" value="Methylthiotransferase_N_sf"/>
</dbReference>
<dbReference type="InterPro" id="IPR006463">
    <property type="entry name" value="MiaB_methiolase"/>
</dbReference>
<dbReference type="InterPro" id="IPR007197">
    <property type="entry name" value="rSAM"/>
</dbReference>
<dbReference type="InterPro" id="IPR023404">
    <property type="entry name" value="rSAM_horseshoe"/>
</dbReference>
<dbReference type="InterPro" id="IPR002792">
    <property type="entry name" value="TRAM_dom"/>
</dbReference>
<dbReference type="NCBIfam" id="TIGR01574">
    <property type="entry name" value="miaB-methiolase"/>
    <property type="match status" value="1"/>
</dbReference>
<dbReference type="NCBIfam" id="TIGR00089">
    <property type="entry name" value="MiaB/RimO family radical SAM methylthiotransferase"/>
    <property type="match status" value="1"/>
</dbReference>
<dbReference type="PANTHER" id="PTHR43020">
    <property type="entry name" value="CDK5 REGULATORY SUBUNIT-ASSOCIATED PROTEIN 1"/>
    <property type="match status" value="1"/>
</dbReference>
<dbReference type="PANTHER" id="PTHR43020:SF2">
    <property type="entry name" value="MITOCHONDRIAL TRNA METHYLTHIOTRANSFERASE CDK5RAP1"/>
    <property type="match status" value="1"/>
</dbReference>
<dbReference type="Pfam" id="PF04055">
    <property type="entry name" value="Radical_SAM"/>
    <property type="match status" value="1"/>
</dbReference>
<dbReference type="Pfam" id="PF01938">
    <property type="entry name" value="TRAM"/>
    <property type="match status" value="1"/>
</dbReference>
<dbReference type="Pfam" id="PF00919">
    <property type="entry name" value="UPF0004"/>
    <property type="match status" value="1"/>
</dbReference>
<dbReference type="SFLD" id="SFLDF00273">
    <property type="entry name" value="(dimethylallyl)adenosine_tRNA"/>
    <property type="match status" value="1"/>
</dbReference>
<dbReference type="SFLD" id="SFLDG01082">
    <property type="entry name" value="B12-binding_domain_containing"/>
    <property type="match status" value="1"/>
</dbReference>
<dbReference type="SFLD" id="SFLDS00029">
    <property type="entry name" value="Radical_SAM"/>
    <property type="match status" value="1"/>
</dbReference>
<dbReference type="SMART" id="SM00729">
    <property type="entry name" value="Elp3"/>
    <property type="match status" value="1"/>
</dbReference>
<dbReference type="SUPFAM" id="SSF102114">
    <property type="entry name" value="Radical SAM enzymes"/>
    <property type="match status" value="1"/>
</dbReference>
<dbReference type="PROSITE" id="PS51449">
    <property type="entry name" value="MTTASE_N"/>
    <property type="match status" value="1"/>
</dbReference>
<dbReference type="PROSITE" id="PS01278">
    <property type="entry name" value="MTTASE_RADICAL"/>
    <property type="match status" value="1"/>
</dbReference>
<dbReference type="PROSITE" id="PS51918">
    <property type="entry name" value="RADICAL_SAM"/>
    <property type="match status" value="1"/>
</dbReference>
<dbReference type="PROSITE" id="PS50926">
    <property type="entry name" value="TRAM"/>
    <property type="match status" value="1"/>
</dbReference>
<protein>
    <recommendedName>
        <fullName evidence="1">tRNA-2-methylthio-N(6)-dimethylallyladenosine synthase</fullName>
        <ecNumber evidence="1">2.8.4.3</ecNumber>
    </recommendedName>
    <alternativeName>
        <fullName evidence="1">(Dimethylallyl)adenosine tRNA methylthiotransferase MiaB</fullName>
    </alternativeName>
    <alternativeName>
        <fullName evidence="1">tRNA-i(6)A37 methylthiotransferase</fullName>
    </alternativeName>
</protein>
<proteinExistence type="inferred from homology"/>
<name>MIAB_BURPS</name>
<feature type="chain" id="PRO_0000374185" description="tRNA-2-methylthio-N(6)-dimethylallyladenosine synthase">
    <location>
        <begin position="1"/>
        <end position="457"/>
    </location>
</feature>
<feature type="domain" description="MTTase N-terminal" evidence="1">
    <location>
        <begin position="3"/>
        <end position="120"/>
    </location>
</feature>
<feature type="domain" description="Radical SAM core" evidence="2">
    <location>
        <begin position="143"/>
        <end position="377"/>
    </location>
</feature>
<feature type="domain" description="TRAM" evidence="1">
    <location>
        <begin position="380"/>
        <end position="447"/>
    </location>
</feature>
<feature type="binding site" evidence="1">
    <location>
        <position position="12"/>
    </location>
    <ligand>
        <name>[4Fe-4S] cluster</name>
        <dbReference type="ChEBI" id="CHEBI:49883"/>
        <label>1</label>
    </ligand>
</feature>
<feature type="binding site" evidence="1">
    <location>
        <position position="49"/>
    </location>
    <ligand>
        <name>[4Fe-4S] cluster</name>
        <dbReference type="ChEBI" id="CHEBI:49883"/>
        <label>1</label>
    </ligand>
</feature>
<feature type="binding site" evidence="1">
    <location>
        <position position="83"/>
    </location>
    <ligand>
        <name>[4Fe-4S] cluster</name>
        <dbReference type="ChEBI" id="CHEBI:49883"/>
        <label>1</label>
    </ligand>
</feature>
<feature type="binding site" evidence="1">
    <location>
        <position position="157"/>
    </location>
    <ligand>
        <name>[4Fe-4S] cluster</name>
        <dbReference type="ChEBI" id="CHEBI:49883"/>
        <label>2</label>
        <note>4Fe-4S-S-AdoMet</note>
    </ligand>
</feature>
<feature type="binding site" evidence="1">
    <location>
        <position position="161"/>
    </location>
    <ligand>
        <name>[4Fe-4S] cluster</name>
        <dbReference type="ChEBI" id="CHEBI:49883"/>
        <label>2</label>
        <note>4Fe-4S-S-AdoMet</note>
    </ligand>
</feature>
<feature type="binding site" evidence="1">
    <location>
        <position position="164"/>
    </location>
    <ligand>
        <name>[4Fe-4S] cluster</name>
        <dbReference type="ChEBI" id="CHEBI:49883"/>
        <label>2</label>
        <note>4Fe-4S-S-AdoMet</note>
    </ligand>
</feature>
<comment type="function">
    <text evidence="1">Catalyzes the methylthiolation of N6-(dimethylallyl)adenosine (i(6)A), leading to the formation of 2-methylthio-N6-(dimethylallyl)adenosine (ms(2)i(6)A) at position 37 in tRNAs that read codons beginning with uridine.</text>
</comment>
<comment type="catalytic activity">
    <reaction evidence="1">
        <text>N(6)-dimethylallyladenosine(37) in tRNA + (sulfur carrier)-SH + AH2 + 2 S-adenosyl-L-methionine = 2-methylsulfanyl-N(6)-dimethylallyladenosine(37) in tRNA + (sulfur carrier)-H + 5'-deoxyadenosine + L-methionine + A + S-adenosyl-L-homocysteine + 2 H(+)</text>
        <dbReference type="Rhea" id="RHEA:37067"/>
        <dbReference type="Rhea" id="RHEA-COMP:10375"/>
        <dbReference type="Rhea" id="RHEA-COMP:10376"/>
        <dbReference type="Rhea" id="RHEA-COMP:14737"/>
        <dbReference type="Rhea" id="RHEA-COMP:14739"/>
        <dbReference type="ChEBI" id="CHEBI:13193"/>
        <dbReference type="ChEBI" id="CHEBI:15378"/>
        <dbReference type="ChEBI" id="CHEBI:17319"/>
        <dbReference type="ChEBI" id="CHEBI:17499"/>
        <dbReference type="ChEBI" id="CHEBI:29917"/>
        <dbReference type="ChEBI" id="CHEBI:57844"/>
        <dbReference type="ChEBI" id="CHEBI:57856"/>
        <dbReference type="ChEBI" id="CHEBI:59789"/>
        <dbReference type="ChEBI" id="CHEBI:64428"/>
        <dbReference type="ChEBI" id="CHEBI:74415"/>
        <dbReference type="ChEBI" id="CHEBI:74417"/>
        <dbReference type="EC" id="2.8.4.3"/>
    </reaction>
</comment>
<comment type="cofactor">
    <cofactor evidence="1">
        <name>[4Fe-4S] cluster</name>
        <dbReference type="ChEBI" id="CHEBI:49883"/>
    </cofactor>
    <text evidence="1">Binds 2 [4Fe-4S] clusters. One cluster is coordinated with 3 cysteines and an exchangeable S-adenosyl-L-methionine.</text>
</comment>
<comment type="subunit">
    <text evidence="1">Monomer.</text>
</comment>
<comment type="subcellular location">
    <subcellularLocation>
        <location evidence="1">Cytoplasm</location>
    </subcellularLocation>
</comment>
<comment type="similarity">
    <text evidence="1">Belongs to the methylthiotransferase family. MiaB subfamily.</text>
</comment>
<sequence>MTKKVYVKTFGCQMNEYDSDKMVDVLNAAEGLEKTDTPEDADIILFNTCSVREKAQEKVFSDLGRVRELKEAKPDLLIGVGGCVASQEGASIVARAPYVDLVFGPQTLHRLPQMIDARRESGRAQVDITFPEIEKFDHLPPARVEGPSAFVSIMEGCSKYCSYCVVPYTRGDEVSRPLDDVLTEVAGLADQGVREVTLLGQNVNAYRGAIAAGSAEIADFATLIEYVADIPGIERIRYTTSHPKEFTQRLLDVYAKVPKLVDHLHLPVQHGSDRILMAMKRGYTVLEYKSVIRKLRAIRPNLSLSTDIIVGFPGETDADFDKTMALVHEMSYDTSFSFIYSPRPGTPAANLADDTPRELKLKRLQHLQATIEENVARISQSMLGKVERILVEGPSRKDPNELAGRTENNRVVNFPAPSAAHPRLIGQMIDVKINHAYPHSLRGELVLAHGDASAATH</sequence>
<accession>Q63X63</accession>